<reference key="1">
    <citation type="submission" date="2004-06" db="EMBL/GenBank/DDBJ databases">
        <authorList>
            <consortium name="NIH - Xenopus Gene Collection (XGC) project"/>
        </authorList>
    </citation>
    <scope>NUCLEOTIDE SEQUENCE [LARGE SCALE MRNA]</scope>
    <source>
        <tissue>Brain</tissue>
    </source>
</reference>
<sequence length="477" mass="54875">MSNIYIQEPPSNGKVLLKTTAGEIDIELWSKEAPKACRNFVQLCLEGYYDNTIFHRVVPEFIIQGGDPTGTGTGGESVFGKPFRDEFHSRLRFNRRGLVAMANAGPHDNGSQFFFTLGRADELNNKHTIFGKVTGDTIYNILRLAEVDIGEDERPVNPHKIKCTEVLFNPFDDIIPRIDKKTKKDEEEEGKKSKAKGTKNFNLLSFGEEAEEDEEEVNEVSKVMRGKSKSSHDLLKDDPRLSSVPAVEREKDSQSADSDKDEDEMSDDDDEEEDDEMDSDEKHQMKDRISNKLRKDPSKSIKQAENSDEAEERKSSRSEELRREARQLKRELKAAKEKKENNIKESETAKEAENTVANSALEEYLKEKEKYEEVRKKNTNKGVSREQQTLALLDRFKSKLTQAITEPPKEEEASDVDEENDKGWLSHVLQFEEKSGKVKDANMQDEDTFEIYDPRNPVNKRRREESKKIMKQKKERR</sequence>
<accession>Q6GLX7</accession>
<name>CWC27_XENLA</name>
<dbReference type="EMBL" id="BC074317">
    <property type="protein sequence ID" value="AAH74317.1"/>
    <property type="molecule type" value="mRNA"/>
</dbReference>
<dbReference type="RefSeq" id="NP_001086199.1">
    <property type="nucleotide sequence ID" value="NM_001092730.1"/>
</dbReference>
<dbReference type="SMR" id="Q6GLX7"/>
<dbReference type="DNASU" id="444628"/>
<dbReference type="GeneID" id="444628"/>
<dbReference type="KEGG" id="xla:444628"/>
<dbReference type="AGR" id="Xenbase:XB-GENE-942799"/>
<dbReference type="CTD" id="444628"/>
<dbReference type="Xenbase" id="XB-GENE-942799">
    <property type="gene designation" value="cwc27.S"/>
</dbReference>
<dbReference type="OrthoDB" id="442970at2759"/>
<dbReference type="Proteomes" id="UP000186698">
    <property type="component" value="Chromosome 1S"/>
</dbReference>
<dbReference type="Bgee" id="444628">
    <property type="expression patterns" value="Expressed in pancreas and 19 other cell types or tissues"/>
</dbReference>
<dbReference type="GO" id="GO:0071013">
    <property type="term" value="C:catalytic step 2 spliceosome"/>
    <property type="evidence" value="ECO:0000318"/>
    <property type="project" value="GO_Central"/>
</dbReference>
<dbReference type="GO" id="GO:0071005">
    <property type="term" value="C:U2-type precatalytic spliceosome"/>
    <property type="evidence" value="ECO:0000250"/>
    <property type="project" value="UniProtKB"/>
</dbReference>
<dbReference type="GO" id="GO:0003755">
    <property type="term" value="F:peptidyl-prolyl cis-trans isomerase activity"/>
    <property type="evidence" value="ECO:0007669"/>
    <property type="project" value="InterPro"/>
</dbReference>
<dbReference type="GO" id="GO:0006457">
    <property type="term" value="P:protein folding"/>
    <property type="evidence" value="ECO:0000318"/>
    <property type="project" value="GO_Central"/>
</dbReference>
<dbReference type="CDD" id="cd22288">
    <property type="entry name" value="CWC27_CTD"/>
    <property type="match status" value="1"/>
</dbReference>
<dbReference type="CDD" id="cd01925">
    <property type="entry name" value="cyclophilin_CeCYP16-like"/>
    <property type="match status" value="1"/>
</dbReference>
<dbReference type="FunFam" id="2.40.100.10:FF:000007">
    <property type="entry name" value="Peptidyl-prolyl cis-trans isomerase CWC27 homolog"/>
    <property type="match status" value="1"/>
</dbReference>
<dbReference type="Gene3D" id="2.40.100.10">
    <property type="entry name" value="Cyclophilin-like"/>
    <property type="match status" value="1"/>
</dbReference>
<dbReference type="InterPro" id="IPR029000">
    <property type="entry name" value="Cyclophilin-like_dom_sf"/>
</dbReference>
<dbReference type="InterPro" id="IPR020892">
    <property type="entry name" value="Cyclophilin-type_PPIase_CS"/>
</dbReference>
<dbReference type="InterPro" id="IPR002130">
    <property type="entry name" value="Cyclophilin-type_PPIase_dom"/>
</dbReference>
<dbReference type="InterPro" id="IPR044666">
    <property type="entry name" value="Cyclophilin_A-like"/>
</dbReference>
<dbReference type="PANTHER" id="PTHR45625">
    <property type="entry name" value="PEPTIDYL-PROLYL CIS-TRANS ISOMERASE-RELATED"/>
    <property type="match status" value="1"/>
</dbReference>
<dbReference type="PANTHER" id="PTHR45625:SF6">
    <property type="entry name" value="SPLICEOSOME-ASSOCIATED PROTEIN CWC27 HOMOLOG"/>
    <property type="match status" value="1"/>
</dbReference>
<dbReference type="Pfam" id="PF00160">
    <property type="entry name" value="Pro_isomerase"/>
    <property type="match status" value="1"/>
</dbReference>
<dbReference type="PRINTS" id="PR00153">
    <property type="entry name" value="CSAPPISMRASE"/>
</dbReference>
<dbReference type="SUPFAM" id="SSF50891">
    <property type="entry name" value="Cyclophilin-like"/>
    <property type="match status" value="1"/>
</dbReference>
<dbReference type="PROSITE" id="PS00170">
    <property type="entry name" value="CSA_PPIASE_1"/>
    <property type="match status" value="1"/>
</dbReference>
<dbReference type="PROSITE" id="PS50072">
    <property type="entry name" value="CSA_PPIASE_2"/>
    <property type="match status" value="1"/>
</dbReference>
<keyword id="KW-0175">Coiled coil</keyword>
<keyword id="KW-0539">Nucleus</keyword>
<keyword id="KW-0597">Phosphoprotein</keyword>
<keyword id="KW-1185">Reference proteome</keyword>
<protein>
    <recommendedName>
        <fullName evidence="5">Spliceosome-associated protein CWC27 homolog</fullName>
    </recommendedName>
    <alternativeName>
        <fullName evidence="1">Probable inactive peptidyl-prolyl cis-trans isomerase CWC27 homolog</fullName>
        <shortName evidence="1">PPIase CWC27</shortName>
    </alternativeName>
</protein>
<organism>
    <name type="scientific">Xenopus laevis</name>
    <name type="common">African clawed frog</name>
    <dbReference type="NCBI Taxonomy" id="8355"/>
    <lineage>
        <taxon>Eukaryota</taxon>
        <taxon>Metazoa</taxon>
        <taxon>Chordata</taxon>
        <taxon>Craniata</taxon>
        <taxon>Vertebrata</taxon>
        <taxon>Euteleostomi</taxon>
        <taxon>Amphibia</taxon>
        <taxon>Batrachia</taxon>
        <taxon>Anura</taxon>
        <taxon>Pipoidea</taxon>
        <taxon>Pipidae</taxon>
        <taxon>Xenopodinae</taxon>
        <taxon>Xenopus</taxon>
        <taxon>Xenopus</taxon>
    </lineage>
</organism>
<evidence type="ECO:0000250" key="1">
    <source>
        <dbReference type="UniProtKB" id="Q6UX04"/>
    </source>
</evidence>
<evidence type="ECO:0000255" key="2"/>
<evidence type="ECO:0000255" key="3">
    <source>
        <dbReference type="PROSITE-ProRule" id="PRU00156"/>
    </source>
</evidence>
<evidence type="ECO:0000256" key="4">
    <source>
        <dbReference type="SAM" id="MobiDB-lite"/>
    </source>
</evidence>
<evidence type="ECO:0000305" key="5"/>
<proteinExistence type="evidence at transcript level"/>
<feature type="chain" id="PRO_0000313653" description="Spliceosome-associated protein CWC27 homolog">
    <location>
        <begin position="1"/>
        <end position="477"/>
    </location>
</feature>
<feature type="domain" description="PPIase cyclophilin-type" evidence="3">
    <location>
        <begin position="11"/>
        <end position="166"/>
    </location>
</feature>
<feature type="region of interest" description="Disordered" evidence="4">
    <location>
        <begin position="203"/>
        <end position="355"/>
    </location>
</feature>
<feature type="region of interest" description="Disordered" evidence="4">
    <location>
        <begin position="401"/>
        <end position="477"/>
    </location>
</feature>
<feature type="coiled-coil region" evidence="2">
    <location>
        <begin position="308"/>
        <end position="381"/>
    </location>
</feature>
<feature type="compositionally biased region" description="Acidic residues" evidence="4">
    <location>
        <begin position="208"/>
        <end position="218"/>
    </location>
</feature>
<feature type="compositionally biased region" description="Basic and acidic residues" evidence="4">
    <location>
        <begin position="230"/>
        <end position="240"/>
    </location>
</feature>
<feature type="compositionally biased region" description="Basic and acidic residues" evidence="4">
    <location>
        <begin position="247"/>
        <end position="258"/>
    </location>
</feature>
<feature type="compositionally biased region" description="Acidic residues" evidence="4">
    <location>
        <begin position="259"/>
        <end position="279"/>
    </location>
</feature>
<feature type="compositionally biased region" description="Basic and acidic residues" evidence="4">
    <location>
        <begin position="280"/>
        <end position="299"/>
    </location>
</feature>
<feature type="compositionally biased region" description="Basic and acidic residues" evidence="4">
    <location>
        <begin position="311"/>
        <end position="353"/>
    </location>
</feature>
<feature type="compositionally biased region" description="Basic and acidic residues" evidence="4">
    <location>
        <begin position="430"/>
        <end position="442"/>
    </location>
</feature>
<gene>
    <name type="primary">cwc27</name>
    <name type="synonym">sdccag10</name>
</gene>
<comment type="function">
    <text evidence="1">As part of the spliceosome, plays a role in pre-mRNA splicing. Probable inactive PPIase with no peptidyl-prolyl cis-trans isomerase activity.</text>
</comment>
<comment type="subunit">
    <text evidence="1">Part of the activated spliceosome B/catalytic step 1 spliceosome, one of the forms of the spliceosome which has a well-formed active site but still cannot catalyze the branching reaction and is composed at least of 52 proteins, the U2, U5 and U6 snRNAs and the pre-mRNA. Recruited during early steps of activated spliceosome B maturation, it is probably one of the first proteins released from this complex as he matures to the spliceosome C complex. Component of the minor spliceosome, which splices U12-type introns (By similarity).</text>
</comment>
<comment type="subcellular location">
    <subcellularLocation>
        <location evidence="1">Nucleus</location>
    </subcellularLocation>
</comment>
<comment type="similarity">
    <text evidence="5">Belongs to the cyclophilin-type PPIase family.</text>
</comment>
<comment type="caution">
    <text evidence="1">Despite the fact that it belongs to the cyclophilin-type PPIase family, it has probably no peptidyl-prolyl cis-trans isomerase activity.</text>
</comment>